<protein>
    <recommendedName>
        <fullName evidence="1">Elongation factor P</fullName>
        <shortName evidence="1">EF-P</shortName>
    </recommendedName>
</protein>
<accession>B5Z2F6</accession>
<feature type="chain" id="PRO_1000096150" description="Elongation factor P">
    <location>
        <begin position="1"/>
        <end position="188"/>
    </location>
</feature>
<feature type="modified residue" description="N6-(3,6-diaminohexanoyl)-5-hydroxylysine" evidence="1">
    <location>
        <position position="34"/>
    </location>
</feature>
<dbReference type="EMBL" id="CP001164">
    <property type="protein sequence ID" value="ACI39367.1"/>
    <property type="molecule type" value="Genomic_DNA"/>
</dbReference>
<dbReference type="RefSeq" id="WP_000257278.1">
    <property type="nucleotide sequence ID" value="NC_011353.1"/>
</dbReference>
<dbReference type="SMR" id="B5Z2F6"/>
<dbReference type="GeneID" id="93777677"/>
<dbReference type="KEGG" id="ecf:ECH74115_5663"/>
<dbReference type="HOGENOM" id="CLU_074944_0_0_6"/>
<dbReference type="UniPathway" id="UPA00345"/>
<dbReference type="GO" id="GO:0005829">
    <property type="term" value="C:cytosol"/>
    <property type="evidence" value="ECO:0007669"/>
    <property type="project" value="UniProtKB-ARBA"/>
</dbReference>
<dbReference type="GO" id="GO:0003746">
    <property type="term" value="F:translation elongation factor activity"/>
    <property type="evidence" value="ECO:0007669"/>
    <property type="project" value="UniProtKB-UniRule"/>
</dbReference>
<dbReference type="GO" id="GO:0043043">
    <property type="term" value="P:peptide biosynthetic process"/>
    <property type="evidence" value="ECO:0007669"/>
    <property type="project" value="InterPro"/>
</dbReference>
<dbReference type="CDD" id="cd04470">
    <property type="entry name" value="S1_EF-P_repeat_1"/>
    <property type="match status" value="1"/>
</dbReference>
<dbReference type="CDD" id="cd05794">
    <property type="entry name" value="S1_EF-P_repeat_2"/>
    <property type="match status" value="1"/>
</dbReference>
<dbReference type="FunFam" id="2.30.30.30:FF:000003">
    <property type="entry name" value="Elongation factor P"/>
    <property type="match status" value="1"/>
</dbReference>
<dbReference type="FunFam" id="2.40.50.140:FF:000004">
    <property type="entry name" value="Elongation factor P"/>
    <property type="match status" value="1"/>
</dbReference>
<dbReference type="FunFam" id="2.40.50.140:FF:000009">
    <property type="entry name" value="Elongation factor P"/>
    <property type="match status" value="1"/>
</dbReference>
<dbReference type="Gene3D" id="2.30.30.30">
    <property type="match status" value="1"/>
</dbReference>
<dbReference type="Gene3D" id="2.40.50.140">
    <property type="entry name" value="Nucleic acid-binding proteins"/>
    <property type="match status" value="2"/>
</dbReference>
<dbReference type="HAMAP" id="MF_00141">
    <property type="entry name" value="EF_P"/>
    <property type="match status" value="1"/>
</dbReference>
<dbReference type="InterPro" id="IPR015365">
    <property type="entry name" value="Elong-fact-P_C"/>
</dbReference>
<dbReference type="InterPro" id="IPR012340">
    <property type="entry name" value="NA-bd_OB-fold"/>
</dbReference>
<dbReference type="InterPro" id="IPR014722">
    <property type="entry name" value="Rib_uL2_dom2"/>
</dbReference>
<dbReference type="InterPro" id="IPR020599">
    <property type="entry name" value="Transl_elong_fac_P/YeiP"/>
</dbReference>
<dbReference type="InterPro" id="IPR013185">
    <property type="entry name" value="Transl_elong_KOW-like"/>
</dbReference>
<dbReference type="InterPro" id="IPR001059">
    <property type="entry name" value="Transl_elong_P/YeiP_cen"/>
</dbReference>
<dbReference type="InterPro" id="IPR013852">
    <property type="entry name" value="Transl_elong_P/YeiP_CS"/>
</dbReference>
<dbReference type="InterPro" id="IPR011768">
    <property type="entry name" value="Transl_elongation_fac_P"/>
</dbReference>
<dbReference type="InterPro" id="IPR008991">
    <property type="entry name" value="Translation_prot_SH3-like_sf"/>
</dbReference>
<dbReference type="NCBIfam" id="TIGR00038">
    <property type="entry name" value="efp"/>
    <property type="match status" value="1"/>
</dbReference>
<dbReference type="NCBIfam" id="NF001810">
    <property type="entry name" value="PRK00529.1"/>
    <property type="match status" value="1"/>
</dbReference>
<dbReference type="PANTHER" id="PTHR30053">
    <property type="entry name" value="ELONGATION FACTOR P"/>
    <property type="match status" value="1"/>
</dbReference>
<dbReference type="PANTHER" id="PTHR30053:SF12">
    <property type="entry name" value="ELONGATION FACTOR P (EF-P) FAMILY PROTEIN"/>
    <property type="match status" value="1"/>
</dbReference>
<dbReference type="Pfam" id="PF01132">
    <property type="entry name" value="EFP"/>
    <property type="match status" value="1"/>
</dbReference>
<dbReference type="Pfam" id="PF08207">
    <property type="entry name" value="EFP_N"/>
    <property type="match status" value="1"/>
</dbReference>
<dbReference type="Pfam" id="PF09285">
    <property type="entry name" value="Elong-fact-P_C"/>
    <property type="match status" value="1"/>
</dbReference>
<dbReference type="PIRSF" id="PIRSF005901">
    <property type="entry name" value="EF-P"/>
    <property type="match status" value="1"/>
</dbReference>
<dbReference type="SMART" id="SM01185">
    <property type="entry name" value="EFP"/>
    <property type="match status" value="1"/>
</dbReference>
<dbReference type="SMART" id="SM00841">
    <property type="entry name" value="Elong-fact-P_C"/>
    <property type="match status" value="1"/>
</dbReference>
<dbReference type="SUPFAM" id="SSF50249">
    <property type="entry name" value="Nucleic acid-binding proteins"/>
    <property type="match status" value="2"/>
</dbReference>
<dbReference type="SUPFAM" id="SSF50104">
    <property type="entry name" value="Translation proteins SH3-like domain"/>
    <property type="match status" value="1"/>
</dbReference>
<dbReference type="PROSITE" id="PS01275">
    <property type="entry name" value="EFP"/>
    <property type="match status" value="1"/>
</dbReference>
<comment type="function">
    <text evidence="1">Involved in peptide bond synthesis. Alleviates ribosome stalling that occurs when 3 or more consecutive Pro residues or the sequence PPG is present in a protein, possibly by augmenting the peptidyl transferase activity of the ribosome. Modification of Lys-34 is required for alleviation.</text>
</comment>
<comment type="pathway">
    <text evidence="1">Protein biosynthesis; polypeptide chain elongation.</text>
</comment>
<comment type="subcellular location">
    <subcellularLocation>
        <location evidence="1">Cytoplasm</location>
    </subcellularLocation>
</comment>
<comment type="PTM">
    <text evidence="1">Is beta-lysylated on the epsilon-amino group of Lys-34 by the combined action of EpmA and EpmB, and then hydroxylated on the C5 position of the same residue by EpmC. Lysylation is critical for the stimulatory effect of EF-P on peptide-bond formation. The lysylation moiety would extend toward the peptidyltransferase center and stabilize the terminal 3-CCA end of the tRNA. The hydroxylation of the C5 position on Lys-34 would allow additional potential stabilizing hydrogen-bond interactions with the P-tRNA.</text>
</comment>
<comment type="similarity">
    <text evidence="1">Belongs to the elongation factor P family.</text>
</comment>
<proteinExistence type="inferred from homology"/>
<reference key="1">
    <citation type="journal article" date="2011" name="Proc. Natl. Acad. Sci. U.S.A.">
        <title>Genomic anatomy of Escherichia coli O157:H7 outbreaks.</title>
        <authorList>
            <person name="Eppinger M."/>
            <person name="Mammel M.K."/>
            <person name="Leclerc J.E."/>
            <person name="Ravel J."/>
            <person name="Cebula T.A."/>
        </authorList>
    </citation>
    <scope>NUCLEOTIDE SEQUENCE [LARGE SCALE GENOMIC DNA]</scope>
    <source>
        <strain>EC4115 / EHEC</strain>
    </source>
</reference>
<sequence length="188" mass="20591">MATYYSNDFRAGLKIMLDGEPYAVEASEFVKPGKGQAFARVKLRRLLTGTRVEKTFKSTDSAEGADVVDMNLTYLYNDGEFWHFMNNETFEQLSADAKAIGDNAKWLLDQAECIVTLWNGQPISVTPPNFVELEIVDTDPGLKGDTAGTGGKPATLSTGAVVKVPLFVQIGEVIKVDTRSGEYVSRVK</sequence>
<keyword id="KW-0963">Cytoplasm</keyword>
<keyword id="KW-0251">Elongation factor</keyword>
<keyword id="KW-0379">Hydroxylation</keyword>
<keyword id="KW-0648">Protein biosynthesis</keyword>
<organism>
    <name type="scientific">Escherichia coli O157:H7 (strain EC4115 / EHEC)</name>
    <dbReference type="NCBI Taxonomy" id="444450"/>
    <lineage>
        <taxon>Bacteria</taxon>
        <taxon>Pseudomonadati</taxon>
        <taxon>Pseudomonadota</taxon>
        <taxon>Gammaproteobacteria</taxon>
        <taxon>Enterobacterales</taxon>
        <taxon>Enterobacteriaceae</taxon>
        <taxon>Escherichia</taxon>
    </lineage>
</organism>
<name>EFP_ECO5E</name>
<evidence type="ECO:0000255" key="1">
    <source>
        <dbReference type="HAMAP-Rule" id="MF_00141"/>
    </source>
</evidence>
<gene>
    <name evidence="1" type="primary">efp</name>
    <name type="ordered locus">ECH74115_5663</name>
</gene>